<feature type="chain" id="PRO_1000060553" description="Integration host factor subunit alpha">
    <location>
        <begin position="1"/>
        <end position="102"/>
    </location>
</feature>
<sequence>MSDSTLTRMDLAEAVFREVGLSRHESAQLVESVLGHISDALVRGEQVKISSFGTFSVRDKNERIGRNPKTGEEVPITPRRVLSFRPSHLMKDRVAAGNRRKG</sequence>
<accession>A1B366</accession>
<name>IHFA_PARDP</name>
<protein>
    <recommendedName>
        <fullName evidence="1">Integration host factor subunit alpha</fullName>
        <shortName evidence="1">IHF-alpha</shortName>
    </recommendedName>
</protein>
<reference key="1">
    <citation type="submission" date="2006-12" db="EMBL/GenBank/DDBJ databases">
        <title>Complete sequence of chromosome 1 of Paracoccus denitrificans PD1222.</title>
        <authorList>
            <person name="Copeland A."/>
            <person name="Lucas S."/>
            <person name="Lapidus A."/>
            <person name="Barry K."/>
            <person name="Detter J.C."/>
            <person name="Glavina del Rio T."/>
            <person name="Hammon N."/>
            <person name="Israni S."/>
            <person name="Dalin E."/>
            <person name="Tice H."/>
            <person name="Pitluck S."/>
            <person name="Munk A.C."/>
            <person name="Brettin T."/>
            <person name="Bruce D."/>
            <person name="Han C."/>
            <person name="Tapia R."/>
            <person name="Gilna P."/>
            <person name="Schmutz J."/>
            <person name="Larimer F."/>
            <person name="Land M."/>
            <person name="Hauser L."/>
            <person name="Kyrpides N."/>
            <person name="Lykidis A."/>
            <person name="Spiro S."/>
            <person name="Richardson D.J."/>
            <person name="Moir J.W.B."/>
            <person name="Ferguson S.J."/>
            <person name="van Spanning R.J.M."/>
            <person name="Richardson P."/>
        </authorList>
    </citation>
    <scope>NUCLEOTIDE SEQUENCE [LARGE SCALE GENOMIC DNA]</scope>
    <source>
        <strain>Pd 1222</strain>
    </source>
</reference>
<proteinExistence type="inferred from homology"/>
<gene>
    <name evidence="1" type="primary">ihfA</name>
    <name evidence="1" type="synonym">himA</name>
    <name type="ordered locus">Pden_1863</name>
</gene>
<dbReference type="EMBL" id="CP000489">
    <property type="protein sequence ID" value="ABL69960.1"/>
    <property type="molecule type" value="Genomic_DNA"/>
</dbReference>
<dbReference type="RefSeq" id="WP_011748157.1">
    <property type="nucleotide sequence ID" value="NC_008686.1"/>
</dbReference>
<dbReference type="SMR" id="A1B366"/>
<dbReference type="STRING" id="318586.Pden_1863"/>
<dbReference type="EnsemblBacteria" id="ABL69960">
    <property type="protein sequence ID" value="ABL69960"/>
    <property type="gene ID" value="Pden_1863"/>
</dbReference>
<dbReference type="GeneID" id="93450259"/>
<dbReference type="KEGG" id="pde:Pden_1863"/>
<dbReference type="eggNOG" id="COG0776">
    <property type="taxonomic scope" value="Bacteria"/>
</dbReference>
<dbReference type="HOGENOM" id="CLU_105066_1_3_5"/>
<dbReference type="OrthoDB" id="9797747at2"/>
<dbReference type="Proteomes" id="UP000000361">
    <property type="component" value="Chromosome 1"/>
</dbReference>
<dbReference type="GO" id="GO:0005829">
    <property type="term" value="C:cytosol"/>
    <property type="evidence" value="ECO:0007669"/>
    <property type="project" value="TreeGrafter"/>
</dbReference>
<dbReference type="GO" id="GO:0003677">
    <property type="term" value="F:DNA binding"/>
    <property type="evidence" value="ECO:0007669"/>
    <property type="project" value="UniProtKB-UniRule"/>
</dbReference>
<dbReference type="GO" id="GO:0030527">
    <property type="term" value="F:structural constituent of chromatin"/>
    <property type="evidence" value="ECO:0007669"/>
    <property type="project" value="InterPro"/>
</dbReference>
<dbReference type="GO" id="GO:0006310">
    <property type="term" value="P:DNA recombination"/>
    <property type="evidence" value="ECO:0007669"/>
    <property type="project" value="UniProtKB-UniRule"/>
</dbReference>
<dbReference type="GO" id="GO:0009893">
    <property type="term" value="P:positive regulation of metabolic process"/>
    <property type="evidence" value="ECO:0007669"/>
    <property type="project" value="UniProtKB-ARBA"/>
</dbReference>
<dbReference type="GO" id="GO:0006355">
    <property type="term" value="P:regulation of DNA-templated transcription"/>
    <property type="evidence" value="ECO:0007669"/>
    <property type="project" value="UniProtKB-UniRule"/>
</dbReference>
<dbReference type="GO" id="GO:0006417">
    <property type="term" value="P:regulation of translation"/>
    <property type="evidence" value="ECO:0007669"/>
    <property type="project" value="UniProtKB-UniRule"/>
</dbReference>
<dbReference type="CDD" id="cd13835">
    <property type="entry name" value="IHF_A"/>
    <property type="match status" value="1"/>
</dbReference>
<dbReference type="Gene3D" id="4.10.520.10">
    <property type="entry name" value="IHF-like DNA-binding proteins"/>
    <property type="match status" value="1"/>
</dbReference>
<dbReference type="HAMAP" id="MF_00380">
    <property type="entry name" value="IHF_alpha"/>
    <property type="match status" value="1"/>
</dbReference>
<dbReference type="InterPro" id="IPR000119">
    <property type="entry name" value="Hist_DNA-bd"/>
</dbReference>
<dbReference type="InterPro" id="IPR020816">
    <property type="entry name" value="Histone-like_DNA-bd_CS"/>
</dbReference>
<dbReference type="InterPro" id="IPR010992">
    <property type="entry name" value="IHF-like_DNA-bd_dom_sf"/>
</dbReference>
<dbReference type="InterPro" id="IPR005684">
    <property type="entry name" value="IHF_alpha"/>
</dbReference>
<dbReference type="NCBIfam" id="TIGR00987">
    <property type="entry name" value="himA"/>
    <property type="match status" value="1"/>
</dbReference>
<dbReference type="NCBIfam" id="NF001401">
    <property type="entry name" value="PRK00285.1"/>
    <property type="match status" value="1"/>
</dbReference>
<dbReference type="PANTHER" id="PTHR33175">
    <property type="entry name" value="DNA-BINDING PROTEIN HU"/>
    <property type="match status" value="1"/>
</dbReference>
<dbReference type="PANTHER" id="PTHR33175:SF2">
    <property type="entry name" value="INTEGRATION HOST FACTOR SUBUNIT ALPHA"/>
    <property type="match status" value="1"/>
</dbReference>
<dbReference type="Pfam" id="PF00216">
    <property type="entry name" value="Bac_DNA_binding"/>
    <property type="match status" value="1"/>
</dbReference>
<dbReference type="PRINTS" id="PR01727">
    <property type="entry name" value="DNABINDINGHU"/>
</dbReference>
<dbReference type="SMART" id="SM00411">
    <property type="entry name" value="BHL"/>
    <property type="match status" value="1"/>
</dbReference>
<dbReference type="SUPFAM" id="SSF47729">
    <property type="entry name" value="IHF-like DNA-binding proteins"/>
    <property type="match status" value="1"/>
</dbReference>
<dbReference type="PROSITE" id="PS00045">
    <property type="entry name" value="HISTONE_LIKE"/>
    <property type="match status" value="1"/>
</dbReference>
<comment type="function">
    <text evidence="1">This protein is one of the two subunits of integration host factor, a specific DNA-binding protein that functions in genetic recombination as well as in transcriptional and translational control.</text>
</comment>
<comment type="subunit">
    <text evidence="1">Heterodimer of an alpha and a beta chain.</text>
</comment>
<comment type="similarity">
    <text evidence="1">Belongs to the bacterial histone-like protein family.</text>
</comment>
<keyword id="KW-0233">DNA recombination</keyword>
<keyword id="KW-0238">DNA-binding</keyword>
<keyword id="KW-1185">Reference proteome</keyword>
<keyword id="KW-0804">Transcription</keyword>
<keyword id="KW-0805">Transcription regulation</keyword>
<keyword id="KW-0810">Translation regulation</keyword>
<evidence type="ECO:0000255" key="1">
    <source>
        <dbReference type="HAMAP-Rule" id="MF_00380"/>
    </source>
</evidence>
<organism>
    <name type="scientific">Paracoccus denitrificans (strain Pd 1222)</name>
    <dbReference type="NCBI Taxonomy" id="318586"/>
    <lineage>
        <taxon>Bacteria</taxon>
        <taxon>Pseudomonadati</taxon>
        <taxon>Pseudomonadota</taxon>
        <taxon>Alphaproteobacteria</taxon>
        <taxon>Rhodobacterales</taxon>
        <taxon>Paracoccaceae</taxon>
        <taxon>Paracoccus</taxon>
    </lineage>
</organism>